<feature type="chain" id="PRO_0000047747" description="Zinc finger and BTB domain-containing protein 46">
    <location>
        <begin position="1"/>
        <end position="600"/>
    </location>
</feature>
<feature type="domain" description="BTB" evidence="2">
    <location>
        <begin position="31"/>
        <end position="99"/>
    </location>
</feature>
<feature type="zinc finger region" description="C2H2-type 1" evidence="3">
    <location>
        <begin position="418"/>
        <end position="436"/>
    </location>
</feature>
<feature type="zinc finger region" description="C2H2-type 2" evidence="3">
    <location>
        <begin position="446"/>
        <end position="468"/>
    </location>
</feature>
<feature type="region of interest" description="Disordered" evidence="4">
    <location>
        <begin position="173"/>
        <end position="222"/>
    </location>
</feature>
<feature type="region of interest" description="Disordered" evidence="4">
    <location>
        <begin position="235"/>
        <end position="278"/>
    </location>
</feature>
<feature type="region of interest" description="Disordered" evidence="4">
    <location>
        <begin position="513"/>
        <end position="600"/>
    </location>
</feature>
<feature type="compositionally biased region" description="Basic and acidic residues" evidence="4">
    <location>
        <begin position="197"/>
        <end position="207"/>
    </location>
</feature>
<feature type="compositionally biased region" description="Polar residues" evidence="4">
    <location>
        <begin position="243"/>
        <end position="259"/>
    </location>
</feature>
<feature type="compositionally biased region" description="Acidic residues" evidence="4">
    <location>
        <begin position="533"/>
        <end position="555"/>
    </location>
</feature>
<feature type="compositionally biased region" description="Basic and acidic residues" evidence="4">
    <location>
        <begin position="556"/>
        <end position="574"/>
    </location>
</feature>
<feature type="compositionally biased region" description="Basic and acidic residues" evidence="4">
    <location>
        <begin position="591"/>
        <end position="600"/>
    </location>
</feature>
<feature type="modified residue" description="Phosphoserine" evidence="1">
    <location>
        <position position="234"/>
    </location>
</feature>
<feature type="cross-link" description="Glycyl lysine isopeptide (Lys-Gly) (interchain with G-Cter in SUMO2)" evidence="1">
    <location>
        <position position="229"/>
    </location>
</feature>
<feature type="splice variant" id="VSP_009387" description="In isoform 2." evidence="6 7">
    <original>LNEFTVIRKKFKCPYCSFSAMHQCILK</original>
    <variation>RKCKFWCVTVSSFGLSTSVQPFRPWSH</variation>
    <location>
        <begin position="408"/>
        <end position="434"/>
    </location>
</feature>
<feature type="splice variant" id="VSP_009388" description="In isoform 2." evidence="6 7">
    <location>
        <begin position="435"/>
        <end position="600"/>
    </location>
</feature>
<feature type="sequence conflict" description="In Ref. 1; BAC30190." evidence="8" ref="1">
    <original>Q</original>
    <variation>K</variation>
    <location>
        <position position="363"/>
    </location>
</feature>
<sequence length="600" mass="65499">MNNRKEDMEITSHYRHLLRELNEQRQHGVLCDACVVVEGKVFKAHKNVLLGSSRYFKTLYCQVQKTSDQATVTHLDIVTAQGFKAIIDFMYSAHLALTSRNVIEVMSAASFLQMTDIVQACHDFIKAALDISIKSDASDELSEFEIGTPASNSTEALISAVMAGRSISPWLARRTSPANSSGDSAIASCHEGGSSYGKEDQEPKADGPDDVSSQSLWPGDVGYGSLRIKEEQISPSHYGGSELPSSKDTAIQNSLSEQGSGDGWQPTGRRKNRKNKETVRHITQQVEEDSQAGSPVPSFLPTSGWPFSSRDSNVDLTVTEASSLDSRGERAELYAHIDEGLLGGETSYLGPPLTPEKEEALHQATAVANLRAALMSKNSLLSLKADVLGDDGSLLFEYLPKGAHSLSLNEFTVIRKKFKCPYCSFSAMHQCILKRHMRSHTGERPYPCEICGKKFTRREHMKRHTLVHSKDKKYVCKVCSRVFMSAASVGIKHGSRRHGVCADCAGRGVGTPLDHGGGGEGSPEALFAGEGPYLEDPDDPRGEAEEELVEDEDEDVAKWKDDVGLAHEDALLGDDKDDEDSPQGPHSPSGEPDKDFAWIS</sequence>
<gene>
    <name type="primary">Zbtb46</name>
    <name type="synonym">Btbd4</name>
</gene>
<accession>Q8BID6</accession>
<accession>A2AUD2</accession>
<accession>Q3U2R2</accession>
<accession>Q9D0G6</accession>
<accession>Q9D492</accession>
<dbReference type="EMBL" id="AK011461">
    <property type="protein sequence ID" value="BAB27633.1"/>
    <property type="molecule type" value="mRNA"/>
</dbReference>
<dbReference type="EMBL" id="AK016700">
    <property type="protein sequence ID" value="BAB30386.1"/>
    <property type="status" value="ALT_INIT"/>
    <property type="molecule type" value="mRNA"/>
</dbReference>
<dbReference type="EMBL" id="AK038975">
    <property type="protein sequence ID" value="BAC30190.1"/>
    <property type="status" value="ALT_INIT"/>
    <property type="molecule type" value="mRNA"/>
</dbReference>
<dbReference type="EMBL" id="AK155148">
    <property type="protein sequence ID" value="BAE33078.1"/>
    <property type="molecule type" value="mRNA"/>
</dbReference>
<dbReference type="EMBL" id="AL929094">
    <property type="status" value="NOT_ANNOTATED_CDS"/>
    <property type="molecule type" value="Genomic_DNA"/>
</dbReference>
<dbReference type="EMBL" id="BC058179">
    <property type="protein sequence ID" value="AAH58179.1"/>
    <property type="molecule type" value="mRNA"/>
</dbReference>
<dbReference type="CCDS" id="CCDS17212.1">
    <molecule id="Q8BID6-2"/>
</dbReference>
<dbReference type="CCDS" id="CCDS50854.1">
    <molecule id="Q8BID6-1"/>
</dbReference>
<dbReference type="RefSeq" id="NP_081932.1">
    <molecule id="Q8BID6-1"/>
    <property type="nucleotide sequence ID" value="NM_027656.3"/>
</dbReference>
<dbReference type="RefSeq" id="NP_082401.1">
    <molecule id="Q8BID6-2"/>
    <property type="nucleotide sequence ID" value="NM_028125.3"/>
</dbReference>
<dbReference type="RefSeq" id="XP_006500775.1">
    <property type="nucleotide sequence ID" value="XM_006500712.3"/>
</dbReference>
<dbReference type="RefSeq" id="XP_006500776.1">
    <molecule id="Q8BID6-1"/>
    <property type="nucleotide sequence ID" value="XM_006500713.4"/>
</dbReference>
<dbReference type="SMR" id="Q8BID6"/>
<dbReference type="FunCoup" id="Q8BID6">
    <property type="interactions" value="96"/>
</dbReference>
<dbReference type="IntAct" id="Q8BID6">
    <property type="interactions" value="2"/>
</dbReference>
<dbReference type="MINT" id="Q8BID6"/>
<dbReference type="STRING" id="10090.ENSMUSP00000029106"/>
<dbReference type="iPTMnet" id="Q8BID6"/>
<dbReference type="PhosphoSitePlus" id="Q8BID6"/>
<dbReference type="PaxDb" id="10090-ENSMUSP00000084672"/>
<dbReference type="ProteomicsDB" id="298498">
    <molecule id="Q8BID6-1"/>
</dbReference>
<dbReference type="ProteomicsDB" id="298499">
    <molecule id="Q8BID6-2"/>
</dbReference>
<dbReference type="Antibodypedia" id="2860">
    <property type="antibodies" value="185 antibodies from 26 providers"/>
</dbReference>
<dbReference type="DNASU" id="72147"/>
<dbReference type="Ensembl" id="ENSMUST00000029106.13">
    <molecule id="Q8BID6-1"/>
    <property type="protein sequence ID" value="ENSMUSP00000029106.7"/>
    <property type="gene ID" value="ENSMUSG00000027583.14"/>
</dbReference>
<dbReference type="Ensembl" id="ENSMUST00000087409.10">
    <molecule id="Q8BID6-2"/>
    <property type="protein sequence ID" value="ENSMUSP00000084672.4"/>
    <property type="gene ID" value="ENSMUSG00000027583.14"/>
</dbReference>
<dbReference type="Ensembl" id="ENSMUST00000180222.8">
    <molecule id="Q8BID6-1"/>
    <property type="protein sequence ID" value="ENSMUSP00000137014.2"/>
    <property type="gene ID" value="ENSMUSG00000027583.14"/>
</dbReference>
<dbReference type="GeneID" id="72147"/>
<dbReference type="KEGG" id="mmu:72147"/>
<dbReference type="UCSC" id="uc008omh.2">
    <molecule id="Q8BID6-2"/>
    <property type="organism name" value="mouse"/>
</dbReference>
<dbReference type="UCSC" id="uc008omi.1">
    <molecule id="Q8BID6-1"/>
    <property type="organism name" value="mouse"/>
</dbReference>
<dbReference type="AGR" id="MGI:1919397"/>
<dbReference type="CTD" id="140685"/>
<dbReference type="MGI" id="MGI:1919397">
    <property type="gene designation" value="Zbtb46"/>
</dbReference>
<dbReference type="VEuPathDB" id="HostDB:ENSMUSG00000027583"/>
<dbReference type="eggNOG" id="KOG1721">
    <property type="taxonomic scope" value="Eukaryota"/>
</dbReference>
<dbReference type="GeneTree" id="ENSGT00940000158060"/>
<dbReference type="HOGENOM" id="CLU_022356_2_0_1"/>
<dbReference type="InParanoid" id="Q8BID6"/>
<dbReference type="OMA" id="WPADSGM"/>
<dbReference type="OrthoDB" id="8117402at2759"/>
<dbReference type="PhylomeDB" id="Q8BID6"/>
<dbReference type="TreeFam" id="TF341953"/>
<dbReference type="BioGRID-ORCS" id="72147">
    <property type="hits" value="3 hits in 78 CRISPR screens"/>
</dbReference>
<dbReference type="ChiTaRS" id="Zbtb46">
    <property type="organism name" value="mouse"/>
</dbReference>
<dbReference type="PRO" id="PR:Q8BID6"/>
<dbReference type="Proteomes" id="UP000000589">
    <property type="component" value="Chromosome 2"/>
</dbReference>
<dbReference type="RNAct" id="Q8BID6">
    <property type="molecule type" value="protein"/>
</dbReference>
<dbReference type="Bgee" id="ENSMUSG00000027583">
    <property type="expression patterns" value="Expressed in animal zygote and 217 other cell types or tissues"/>
</dbReference>
<dbReference type="ExpressionAtlas" id="Q8BID6">
    <property type="expression patterns" value="baseline and differential"/>
</dbReference>
<dbReference type="GO" id="GO:0000785">
    <property type="term" value="C:chromatin"/>
    <property type="evidence" value="ECO:0000314"/>
    <property type="project" value="ARUK-UCL"/>
</dbReference>
<dbReference type="GO" id="GO:0005634">
    <property type="term" value="C:nucleus"/>
    <property type="evidence" value="ECO:0007669"/>
    <property type="project" value="UniProtKB-SubCell"/>
</dbReference>
<dbReference type="GO" id="GO:0001227">
    <property type="term" value="F:DNA-binding transcription repressor activity, RNA polymerase II-specific"/>
    <property type="evidence" value="ECO:0000314"/>
    <property type="project" value="ARUK-UCL"/>
</dbReference>
<dbReference type="GO" id="GO:0000976">
    <property type="term" value="F:transcription cis-regulatory region binding"/>
    <property type="evidence" value="ECO:0000314"/>
    <property type="project" value="ARUK-UCL"/>
</dbReference>
<dbReference type="GO" id="GO:0008270">
    <property type="term" value="F:zinc ion binding"/>
    <property type="evidence" value="ECO:0007669"/>
    <property type="project" value="UniProtKB-KW"/>
</dbReference>
<dbReference type="GO" id="GO:0097028">
    <property type="term" value="P:dendritic cell differentiation"/>
    <property type="evidence" value="ECO:0000315"/>
    <property type="project" value="MGI"/>
</dbReference>
<dbReference type="GO" id="GO:0030851">
    <property type="term" value="P:granulocyte differentiation"/>
    <property type="evidence" value="ECO:0000315"/>
    <property type="project" value="MGI"/>
</dbReference>
<dbReference type="GO" id="GO:0030225">
    <property type="term" value="P:macrophage differentiation"/>
    <property type="evidence" value="ECO:0000315"/>
    <property type="project" value="MGI"/>
</dbReference>
<dbReference type="GO" id="GO:2001199">
    <property type="term" value="P:negative regulation of dendritic cell differentiation"/>
    <property type="evidence" value="ECO:0000315"/>
    <property type="project" value="MGI"/>
</dbReference>
<dbReference type="GO" id="GO:0030853">
    <property type="term" value="P:negative regulation of granulocyte differentiation"/>
    <property type="evidence" value="ECO:0000315"/>
    <property type="project" value="MGI"/>
</dbReference>
<dbReference type="GO" id="GO:0002695">
    <property type="term" value="P:negative regulation of leukocyte activation"/>
    <property type="evidence" value="ECO:0000315"/>
    <property type="project" value="MGI"/>
</dbReference>
<dbReference type="GO" id="GO:0045650">
    <property type="term" value="P:negative regulation of macrophage differentiation"/>
    <property type="evidence" value="ECO:0000315"/>
    <property type="project" value="MGI"/>
</dbReference>
<dbReference type="GO" id="GO:0045656">
    <property type="term" value="P:negative regulation of monocyte differentiation"/>
    <property type="evidence" value="ECO:0000315"/>
    <property type="project" value="MGI"/>
</dbReference>
<dbReference type="GO" id="GO:0000122">
    <property type="term" value="P:negative regulation of transcription by RNA polymerase II"/>
    <property type="evidence" value="ECO:0000314"/>
    <property type="project" value="ARUK-UCL"/>
</dbReference>
<dbReference type="GO" id="GO:0002273">
    <property type="term" value="P:plasmacytoid dendritic cell differentiation"/>
    <property type="evidence" value="ECO:0000315"/>
    <property type="project" value="MGI"/>
</dbReference>
<dbReference type="GO" id="GO:2001200">
    <property type="term" value="P:positive regulation of dendritic cell differentiation"/>
    <property type="evidence" value="ECO:0000315"/>
    <property type="project" value="MGI"/>
</dbReference>
<dbReference type="CDD" id="cd18230">
    <property type="entry name" value="BTB_POZ_ZBTB46"/>
    <property type="match status" value="1"/>
</dbReference>
<dbReference type="FunFam" id="3.30.160.60:FF:001046">
    <property type="entry name" value="Zinc finger and BTB domain containing 46"/>
    <property type="match status" value="1"/>
</dbReference>
<dbReference type="FunFam" id="3.30.710.10:FF:000045">
    <property type="entry name" value="zinc finger and BTB domain-containing protein 10"/>
    <property type="match status" value="1"/>
</dbReference>
<dbReference type="FunFam" id="3.30.160.60:FF:000379">
    <property type="entry name" value="Zinc finger and BTB domain-containing protein 46"/>
    <property type="match status" value="1"/>
</dbReference>
<dbReference type="Gene3D" id="3.30.160.60">
    <property type="entry name" value="Classic Zinc Finger"/>
    <property type="match status" value="2"/>
</dbReference>
<dbReference type="Gene3D" id="3.30.710.10">
    <property type="entry name" value="Potassium Channel Kv1.1, Chain A"/>
    <property type="match status" value="1"/>
</dbReference>
<dbReference type="InterPro" id="IPR000210">
    <property type="entry name" value="BTB/POZ_dom"/>
</dbReference>
<dbReference type="InterPro" id="IPR011333">
    <property type="entry name" value="SKP1/BTB/POZ_sf"/>
</dbReference>
<dbReference type="InterPro" id="IPR036236">
    <property type="entry name" value="Znf_C2H2_sf"/>
</dbReference>
<dbReference type="InterPro" id="IPR013087">
    <property type="entry name" value="Znf_C2H2_type"/>
</dbReference>
<dbReference type="InterPro" id="IPR050457">
    <property type="entry name" value="ZnFinger_BTB_dom_contain"/>
</dbReference>
<dbReference type="PANTHER" id="PTHR46105">
    <property type="entry name" value="AGAP004733-PA"/>
    <property type="match status" value="1"/>
</dbReference>
<dbReference type="PANTHER" id="PTHR46105:SF21">
    <property type="entry name" value="ZINC FINGER AND BTB DOMAIN CONTAINING 46"/>
    <property type="match status" value="1"/>
</dbReference>
<dbReference type="Pfam" id="PF00651">
    <property type="entry name" value="BTB"/>
    <property type="match status" value="1"/>
</dbReference>
<dbReference type="Pfam" id="PF13465">
    <property type="entry name" value="zf-H2C2_2"/>
    <property type="match status" value="1"/>
</dbReference>
<dbReference type="SMART" id="SM00225">
    <property type="entry name" value="BTB"/>
    <property type="match status" value="1"/>
</dbReference>
<dbReference type="SMART" id="SM00355">
    <property type="entry name" value="ZnF_C2H2"/>
    <property type="match status" value="3"/>
</dbReference>
<dbReference type="SUPFAM" id="SSF57667">
    <property type="entry name" value="beta-beta-alpha zinc fingers"/>
    <property type="match status" value="1"/>
</dbReference>
<dbReference type="SUPFAM" id="SSF54695">
    <property type="entry name" value="POZ domain"/>
    <property type="match status" value="1"/>
</dbReference>
<dbReference type="PROSITE" id="PS50097">
    <property type="entry name" value="BTB"/>
    <property type="match status" value="1"/>
</dbReference>
<dbReference type="PROSITE" id="PS00028">
    <property type="entry name" value="ZINC_FINGER_C2H2_1"/>
    <property type="match status" value="1"/>
</dbReference>
<dbReference type="PROSITE" id="PS50157">
    <property type="entry name" value="ZINC_FINGER_C2H2_2"/>
    <property type="match status" value="2"/>
</dbReference>
<comment type="function">
    <text evidence="5">Functions as a transcriptional repressor for PRDM1.</text>
</comment>
<comment type="interaction">
    <interactant intactId="EBI-7768990">
        <id>Q8BID6</id>
    </interactant>
    <interactant intactId="EBI-7768710">
        <id>Q9CQT7</id>
        <label>Desi1</label>
    </interactant>
    <organismsDiffer>false</organismsDiffer>
    <experiments>2</experiments>
</comment>
<comment type="subcellular location">
    <subcellularLocation>
        <location evidence="8">Nucleus</location>
    </subcellularLocation>
</comment>
<comment type="alternative products">
    <event type="alternative splicing"/>
    <isoform>
        <id>Q8BID6-1</id>
        <name>1</name>
        <sequence type="displayed"/>
    </isoform>
    <isoform>
        <id>Q8BID6-2</id>
        <name>2</name>
        <sequence type="described" ref="VSP_009387 VSP_009388"/>
    </isoform>
</comment>
<comment type="PTM">
    <text evidence="5">Sumoylated. Desumoylation by DESI1 reverses transcriptional repression activity.</text>
</comment>
<comment type="sequence caution" evidence="8">
    <conflict type="erroneous initiation">
        <sequence resource="EMBL-CDS" id="BAB30386"/>
    </conflict>
</comment>
<comment type="sequence caution" evidence="8">
    <conflict type="erroneous initiation">
        <sequence resource="EMBL-CDS" id="BAC30190"/>
    </conflict>
</comment>
<keyword id="KW-0025">Alternative splicing</keyword>
<keyword id="KW-1017">Isopeptide bond</keyword>
<keyword id="KW-0479">Metal-binding</keyword>
<keyword id="KW-0539">Nucleus</keyword>
<keyword id="KW-0597">Phosphoprotein</keyword>
<keyword id="KW-1185">Reference proteome</keyword>
<keyword id="KW-0677">Repeat</keyword>
<keyword id="KW-0804">Transcription</keyword>
<keyword id="KW-0805">Transcription regulation</keyword>
<keyword id="KW-0832">Ubl conjugation</keyword>
<keyword id="KW-0862">Zinc</keyword>
<keyword id="KW-0863">Zinc-finger</keyword>
<name>ZBT46_MOUSE</name>
<proteinExistence type="evidence at protein level"/>
<protein>
    <recommendedName>
        <fullName>Zinc finger and BTB domain-containing protein 46</fullName>
    </recommendedName>
    <alternativeName>
        <fullName>BTB-ZF protein expressed in effector lymphocytes</fullName>
        <shortName>BZEL</shortName>
    </alternativeName>
    <alternativeName>
        <fullName>BTB/POZ domain-containing protein 4</fullName>
    </alternativeName>
</protein>
<evidence type="ECO:0000250" key="1">
    <source>
        <dbReference type="UniProtKB" id="Q86UZ6"/>
    </source>
</evidence>
<evidence type="ECO:0000255" key="2">
    <source>
        <dbReference type="PROSITE-ProRule" id="PRU00037"/>
    </source>
</evidence>
<evidence type="ECO:0000255" key="3">
    <source>
        <dbReference type="PROSITE-ProRule" id="PRU00042"/>
    </source>
</evidence>
<evidence type="ECO:0000256" key="4">
    <source>
        <dbReference type="SAM" id="MobiDB-lite"/>
    </source>
</evidence>
<evidence type="ECO:0000269" key="5">
    <source>
    </source>
</evidence>
<evidence type="ECO:0000303" key="6">
    <source>
    </source>
</evidence>
<evidence type="ECO:0000303" key="7">
    <source>
    </source>
</evidence>
<evidence type="ECO:0000305" key="8"/>
<reference key="1">
    <citation type="journal article" date="2005" name="Science">
        <title>The transcriptional landscape of the mammalian genome.</title>
        <authorList>
            <person name="Carninci P."/>
            <person name="Kasukawa T."/>
            <person name="Katayama S."/>
            <person name="Gough J."/>
            <person name="Frith M.C."/>
            <person name="Maeda N."/>
            <person name="Oyama R."/>
            <person name="Ravasi T."/>
            <person name="Lenhard B."/>
            <person name="Wells C."/>
            <person name="Kodzius R."/>
            <person name="Shimokawa K."/>
            <person name="Bajic V.B."/>
            <person name="Brenner S.E."/>
            <person name="Batalov S."/>
            <person name="Forrest A.R."/>
            <person name="Zavolan M."/>
            <person name="Davis M.J."/>
            <person name="Wilming L.G."/>
            <person name="Aidinis V."/>
            <person name="Allen J.E."/>
            <person name="Ambesi-Impiombato A."/>
            <person name="Apweiler R."/>
            <person name="Aturaliya R.N."/>
            <person name="Bailey T.L."/>
            <person name="Bansal M."/>
            <person name="Baxter L."/>
            <person name="Beisel K.W."/>
            <person name="Bersano T."/>
            <person name="Bono H."/>
            <person name="Chalk A.M."/>
            <person name="Chiu K.P."/>
            <person name="Choudhary V."/>
            <person name="Christoffels A."/>
            <person name="Clutterbuck D.R."/>
            <person name="Crowe M.L."/>
            <person name="Dalla E."/>
            <person name="Dalrymple B.P."/>
            <person name="de Bono B."/>
            <person name="Della Gatta G."/>
            <person name="di Bernardo D."/>
            <person name="Down T."/>
            <person name="Engstrom P."/>
            <person name="Fagiolini M."/>
            <person name="Faulkner G."/>
            <person name="Fletcher C.F."/>
            <person name="Fukushima T."/>
            <person name="Furuno M."/>
            <person name="Futaki S."/>
            <person name="Gariboldi M."/>
            <person name="Georgii-Hemming P."/>
            <person name="Gingeras T.R."/>
            <person name="Gojobori T."/>
            <person name="Green R.E."/>
            <person name="Gustincich S."/>
            <person name="Harbers M."/>
            <person name="Hayashi Y."/>
            <person name="Hensch T.K."/>
            <person name="Hirokawa N."/>
            <person name="Hill D."/>
            <person name="Huminiecki L."/>
            <person name="Iacono M."/>
            <person name="Ikeo K."/>
            <person name="Iwama A."/>
            <person name="Ishikawa T."/>
            <person name="Jakt M."/>
            <person name="Kanapin A."/>
            <person name="Katoh M."/>
            <person name="Kawasawa Y."/>
            <person name="Kelso J."/>
            <person name="Kitamura H."/>
            <person name="Kitano H."/>
            <person name="Kollias G."/>
            <person name="Krishnan S.P."/>
            <person name="Kruger A."/>
            <person name="Kummerfeld S.K."/>
            <person name="Kurochkin I.V."/>
            <person name="Lareau L.F."/>
            <person name="Lazarevic D."/>
            <person name="Lipovich L."/>
            <person name="Liu J."/>
            <person name="Liuni S."/>
            <person name="McWilliam S."/>
            <person name="Madan Babu M."/>
            <person name="Madera M."/>
            <person name="Marchionni L."/>
            <person name="Matsuda H."/>
            <person name="Matsuzawa S."/>
            <person name="Miki H."/>
            <person name="Mignone F."/>
            <person name="Miyake S."/>
            <person name="Morris K."/>
            <person name="Mottagui-Tabar S."/>
            <person name="Mulder N."/>
            <person name="Nakano N."/>
            <person name="Nakauchi H."/>
            <person name="Ng P."/>
            <person name="Nilsson R."/>
            <person name="Nishiguchi S."/>
            <person name="Nishikawa S."/>
            <person name="Nori F."/>
            <person name="Ohara O."/>
            <person name="Okazaki Y."/>
            <person name="Orlando V."/>
            <person name="Pang K.C."/>
            <person name="Pavan W.J."/>
            <person name="Pavesi G."/>
            <person name="Pesole G."/>
            <person name="Petrovsky N."/>
            <person name="Piazza S."/>
            <person name="Reed J."/>
            <person name="Reid J.F."/>
            <person name="Ring B.Z."/>
            <person name="Ringwald M."/>
            <person name="Rost B."/>
            <person name="Ruan Y."/>
            <person name="Salzberg S.L."/>
            <person name="Sandelin A."/>
            <person name="Schneider C."/>
            <person name="Schoenbach C."/>
            <person name="Sekiguchi K."/>
            <person name="Semple C.A."/>
            <person name="Seno S."/>
            <person name="Sessa L."/>
            <person name="Sheng Y."/>
            <person name="Shibata Y."/>
            <person name="Shimada H."/>
            <person name="Shimada K."/>
            <person name="Silva D."/>
            <person name="Sinclair B."/>
            <person name="Sperling S."/>
            <person name="Stupka E."/>
            <person name="Sugiura K."/>
            <person name="Sultana R."/>
            <person name="Takenaka Y."/>
            <person name="Taki K."/>
            <person name="Tammoja K."/>
            <person name="Tan S.L."/>
            <person name="Tang S."/>
            <person name="Taylor M.S."/>
            <person name="Tegner J."/>
            <person name="Teichmann S.A."/>
            <person name="Ueda H.R."/>
            <person name="van Nimwegen E."/>
            <person name="Verardo R."/>
            <person name="Wei C.L."/>
            <person name="Yagi K."/>
            <person name="Yamanishi H."/>
            <person name="Zabarovsky E."/>
            <person name="Zhu S."/>
            <person name="Zimmer A."/>
            <person name="Hide W."/>
            <person name="Bult C."/>
            <person name="Grimmond S.M."/>
            <person name="Teasdale R.D."/>
            <person name="Liu E.T."/>
            <person name="Brusic V."/>
            <person name="Quackenbush J."/>
            <person name="Wahlestedt C."/>
            <person name="Mattick J.S."/>
            <person name="Hume D.A."/>
            <person name="Kai C."/>
            <person name="Sasaki D."/>
            <person name="Tomaru Y."/>
            <person name="Fukuda S."/>
            <person name="Kanamori-Katayama M."/>
            <person name="Suzuki M."/>
            <person name="Aoki J."/>
            <person name="Arakawa T."/>
            <person name="Iida J."/>
            <person name="Imamura K."/>
            <person name="Itoh M."/>
            <person name="Kato T."/>
            <person name="Kawaji H."/>
            <person name="Kawagashira N."/>
            <person name="Kawashima T."/>
            <person name="Kojima M."/>
            <person name="Kondo S."/>
            <person name="Konno H."/>
            <person name="Nakano K."/>
            <person name="Ninomiya N."/>
            <person name="Nishio T."/>
            <person name="Okada M."/>
            <person name="Plessy C."/>
            <person name="Shibata K."/>
            <person name="Shiraki T."/>
            <person name="Suzuki S."/>
            <person name="Tagami M."/>
            <person name="Waki K."/>
            <person name="Watahiki A."/>
            <person name="Okamura-Oho Y."/>
            <person name="Suzuki H."/>
            <person name="Kawai J."/>
            <person name="Hayashizaki Y."/>
        </authorList>
    </citation>
    <scope>NUCLEOTIDE SEQUENCE [LARGE SCALE MRNA] (ISOFORMS 1 AND 2)</scope>
    <source>
        <strain>C57BL/6J</strain>
        <strain>NOD</strain>
        <tissue>Dendritic cell</tissue>
        <tissue>Embryo</tissue>
        <tissue>Hypothalamus</tissue>
        <tissue>Testis</tissue>
    </source>
</reference>
<reference key="2">
    <citation type="journal article" date="2009" name="PLoS Biol.">
        <title>Lineage-specific biology revealed by a finished genome assembly of the mouse.</title>
        <authorList>
            <person name="Church D.M."/>
            <person name="Goodstadt L."/>
            <person name="Hillier L.W."/>
            <person name="Zody M.C."/>
            <person name="Goldstein S."/>
            <person name="She X."/>
            <person name="Bult C.J."/>
            <person name="Agarwala R."/>
            <person name="Cherry J.L."/>
            <person name="DiCuccio M."/>
            <person name="Hlavina W."/>
            <person name="Kapustin Y."/>
            <person name="Meric P."/>
            <person name="Maglott D."/>
            <person name="Birtle Z."/>
            <person name="Marques A.C."/>
            <person name="Graves T."/>
            <person name="Zhou S."/>
            <person name="Teague B."/>
            <person name="Potamousis K."/>
            <person name="Churas C."/>
            <person name="Place M."/>
            <person name="Herschleb J."/>
            <person name="Runnheim R."/>
            <person name="Forrest D."/>
            <person name="Amos-Landgraf J."/>
            <person name="Schwartz D.C."/>
            <person name="Cheng Z."/>
            <person name="Lindblad-Toh K."/>
            <person name="Eichler E.E."/>
            <person name="Ponting C.P."/>
        </authorList>
    </citation>
    <scope>NUCLEOTIDE SEQUENCE [LARGE SCALE GENOMIC DNA]</scope>
    <source>
        <strain>C57BL/6J</strain>
    </source>
</reference>
<reference key="3">
    <citation type="journal article" date="2004" name="Genome Res.">
        <title>The status, quality, and expansion of the NIH full-length cDNA project: the Mammalian Gene Collection (MGC).</title>
        <authorList>
            <consortium name="The MGC Project Team"/>
        </authorList>
    </citation>
    <scope>NUCLEOTIDE SEQUENCE [LARGE SCALE MRNA] (ISOFORM 2)</scope>
    <source>
        <strain>NMRI</strain>
        <tissue>Mammary gland</tissue>
    </source>
</reference>
<reference key="4">
    <citation type="journal article" date="2012" name="EMBO Rep.">
        <title>DeSUMOylating isopeptidase: a second class of SUMO protease.</title>
        <authorList>
            <person name="Shin E.J."/>
            <person name="Shin H.M."/>
            <person name="Nam E."/>
            <person name="Kim W.S."/>
            <person name="Kim J.H."/>
            <person name="Oh B.H."/>
            <person name="Yun Y."/>
        </authorList>
    </citation>
    <scope>FUNCTION</scope>
    <scope>DESUMOYLATION BY DESI1</scope>
</reference>
<organism>
    <name type="scientific">Mus musculus</name>
    <name type="common">Mouse</name>
    <dbReference type="NCBI Taxonomy" id="10090"/>
    <lineage>
        <taxon>Eukaryota</taxon>
        <taxon>Metazoa</taxon>
        <taxon>Chordata</taxon>
        <taxon>Craniata</taxon>
        <taxon>Vertebrata</taxon>
        <taxon>Euteleostomi</taxon>
        <taxon>Mammalia</taxon>
        <taxon>Eutheria</taxon>
        <taxon>Euarchontoglires</taxon>
        <taxon>Glires</taxon>
        <taxon>Rodentia</taxon>
        <taxon>Myomorpha</taxon>
        <taxon>Muroidea</taxon>
        <taxon>Muridae</taxon>
        <taxon>Murinae</taxon>
        <taxon>Mus</taxon>
        <taxon>Mus</taxon>
    </lineage>
</organism>